<keyword id="KW-0066">ATP synthesis</keyword>
<keyword id="KW-0138">CF(0)</keyword>
<keyword id="KW-0375">Hydrogen ion transport</keyword>
<keyword id="KW-0406">Ion transport</keyword>
<keyword id="KW-0472">Membrane</keyword>
<keyword id="KW-0496">Mitochondrion</keyword>
<keyword id="KW-0999">Mitochondrion inner membrane</keyword>
<keyword id="KW-0812">Transmembrane</keyword>
<keyword id="KW-1133">Transmembrane helix</keyword>
<keyword id="KW-0813">Transport</keyword>
<sequence>PQMMGIPLILIAIILPMLLMFTSSTRLSSNRMTTMQLWVMNTITKQLFLPVNMPGHKWAAMLITLMIFLLSMNMLGLLPYTFTPTTQLSMNMALAAPLWLATVLTGLRNQPTASLGHLLPEGTPTPLIPLLIIIETVSLFIRPLALGVRLTANLTAGHLLIQLISTAAFVLMPTMPMAALSTLIVLMLLTGLEIAVAMIQAYVFTLLLTLYL</sequence>
<organism>
    <name type="scientific">Tropidurus montanus</name>
    <name type="common">Lizard</name>
    <dbReference type="NCBI Taxonomy" id="56116"/>
    <lineage>
        <taxon>Eukaryota</taxon>
        <taxon>Metazoa</taxon>
        <taxon>Chordata</taxon>
        <taxon>Craniata</taxon>
        <taxon>Vertebrata</taxon>
        <taxon>Euteleostomi</taxon>
        <taxon>Lepidosauria</taxon>
        <taxon>Squamata</taxon>
        <taxon>Bifurcata</taxon>
        <taxon>Unidentata</taxon>
        <taxon>Episquamata</taxon>
        <taxon>Toxicofera</taxon>
        <taxon>Iguania</taxon>
        <taxon>Iguanidae</taxon>
        <taxon>Tropidurinae</taxon>
        <taxon>Tropidurus</taxon>
    </lineage>
</organism>
<feature type="chain" id="PRO_0000082180" description="ATP synthase F(0) complex subunit a">
    <location>
        <begin position="1" status="less than"/>
        <end position="212" status="greater than"/>
    </location>
</feature>
<feature type="transmembrane region" description="Helical" evidence="2">
    <location>
        <begin position="3"/>
        <end position="23"/>
    </location>
</feature>
<feature type="transmembrane region" description="Helical" evidence="2">
    <location>
        <begin position="58"/>
        <end position="78"/>
    </location>
</feature>
<feature type="transmembrane region" description="Helical" evidence="2">
    <location>
        <begin position="87"/>
        <end position="107"/>
    </location>
</feature>
<feature type="transmembrane region" description="Helical" evidence="2">
    <location>
        <begin position="128"/>
        <end position="148"/>
    </location>
</feature>
<feature type="transmembrane region" description="Helical" evidence="2">
    <location>
        <begin position="154"/>
        <end position="174"/>
    </location>
</feature>
<feature type="transmembrane region" description="Helical" evidence="2">
    <location>
        <begin position="179"/>
        <end position="199"/>
    </location>
</feature>
<feature type="non-terminal residue">
    <location>
        <position position="1"/>
    </location>
</feature>
<feature type="non-terminal residue">
    <location>
        <position position="212"/>
    </location>
</feature>
<proteinExistence type="inferred from homology"/>
<gene>
    <name evidence="1" type="primary">MT-ATP6</name>
    <name type="synonym">ATP6</name>
    <name type="synonym">ATPASE6</name>
    <name type="synonym">MTATP6</name>
</gene>
<accession>O03359</accession>
<dbReference type="EMBL" id="U83498">
    <property type="protein sequence ID" value="AAB84369.1"/>
    <property type="molecule type" value="Genomic_DNA"/>
</dbReference>
<dbReference type="SMR" id="O03359"/>
<dbReference type="GO" id="GO:0005743">
    <property type="term" value="C:mitochondrial inner membrane"/>
    <property type="evidence" value="ECO:0007669"/>
    <property type="project" value="UniProtKB-SubCell"/>
</dbReference>
<dbReference type="GO" id="GO:0045259">
    <property type="term" value="C:proton-transporting ATP synthase complex"/>
    <property type="evidence" value="ECO:0000250"/>
    <property type="project" value="UniProtKB"/>
</dbReference>
<dbReference type="GO" id="GO:0015252">
    <property type="term" value="F:proton channel activity"/>
    <property type="evidence" value="ECO:0000250"/>
    <property type="project" value="UniProtKB"/>
</dbReference>
<dbReference type="GO" id="GO:0046933">
    <property type="term" value="F:proton-transporting ATP synthase activity, rotational mechanism"/>
    <property type="evidence" value="ECO:0007669"/>
    <property type="project" value="TreeGrafter"/>
</dbReference>
<dbReference type="GO" id="GO:0015986">
    <property type="term" value="P:proton motive force-driven ATP synthesis"/>
    <property type="evidence" value="ECO:0000250"/>
    <property type="project" value="UniProtKB"/>
</dbReference>
<dbReference type="GO" id="GO:1902600">
    <property type="term" value="P:proton transmembrane transport"/>
    <property type="evidence" value="ECO:0000250"/>
    <property type="project" value="UniProtKB"/>
</dbReference>
<dbReference type="CDD" id="cd00310">
    <property type="entry name" value="ATP-synt_Fo_a_6"/>
    <property type="match status" value="1"/>
</dbReference>
<dbReference type="FunFam" id="1.20.120.220:FF:000004">
    <property type="entry name" value="ATP synthase subunit a"/>
    <property type="match status" value="1"/>
</dbReference>
<dbReference type="Gene3D" id="1.20.120.220">
    <property type="entry name" value="ATP synthase, F0 complex, subunit A"/>
    <property type="match status" value="1"/>
</dbReference>
<dbReference type="InterPro" id="IPR000568">
    <property type="entry name" value="ATP_synth_F0_asu"/>
</dbReference>
<dbReference type="InterPro" id="IPR023011">
    <property type="entry name" value="ATP_synth_F0_asu_AS"/>
</dbReference>
<dbReference type="InterPro" id="IPR045083">
    <property type="entry name" value="ATP_synth_F0_asu_bact/mt"/>
</dbReference>
<dbReference type="InterPro" id="IPR035908">
    <property type="entry name" value="F0_ATP_A_sf"/>
</dbReference>
<dbReference type="NCBIfam" id="TIGR01131">
    <property type="entry name" value="ATP_synt_6_or_A"/>
    <property type="match status" value="1"/>
</dbReference>
<dbReference type="PANTHER" id="PTHR11410">
    <property type="entry name" value="ATP SYNTHASE SUBUNIT A"/>
    <property type="match status" value="1"/>
</dbReference>
<dbReference type="PANTHER" id="PTHR11410:SF0">
    <property type="entry name" value="ATP SYNTHASE SUBUNIT A"/>
    <property type="match status" value="1"/>
</dbReference>
<dbReference type="Pfam" id="PF00119">
    <property type="entry name" value="ATP-synt_A"/>
    <property type="match status" value="1"/>
</dbReference>
<dbReference type="PRINTS" id="PR00123">
    <property type="entry name" value="ATPASEA"/>
</dbReference>
<dbReference type="SUPFAM" id="SSF81336">
    <property type="entry name" value="F1F0 ATP synthase subunit A"/>
    <property type="match status" value="1"/>
</dbReference>
<dbReference type="PROSITE" id="PS00449">
    <property type="entry name" value="ATPASE_A"/>
    <property type="match status" value="1"/>
</dbReference>
<name>ATP6_TROMO</name>
<evidence type="ECO:0000250" key="1">
    <source>
        <dbReference type="UniProtKB" id="P00846"/>
    </source>
</evidence>
<evidence type="ECO:0000255" key="2"/>
<evidence type="ECO:0000305" key="3"/>
<geneLocation type="mitochondrion"/>
<comment type="function">
    <text evidence="1">Subunit a, of the mitochondrial membrane ATP synthase complex (F(1)F(0) ATP synthase or Complex V) that produces ATP from ADP in the presence of a proton gradient across the membrane which is generated by electron transport complexes of the respiratory chain. ATP synthase complex consist of a soluble F(1) head domain - the catalytic core - and a membrane F(1) domain - the membrane proton channel. These two domains are linked by a central stalk rotating inside the F(1) region and a stationary peripheral stalk. During catalysis, ATP synthesis in the catalytic domain of F(1) is coupled via a rotary mechanism of the central stalk subunits to proton translocation. With the subunit c (ATP5MC1), forms the proton-conducting channel in the F(0) domain, that contains two crucial half-channels (inlet and outlet) that facilitate proton movement from the mitochondrial intermembrane space (IMS) into the matrix. Protons are taken up via the inlet half-channel and released through the outlet half-channel, following a Grotthuss mechanism.</text>
</comment>
<comment type="catalytic activity">
    <reaction evidence="1">
        <text>H(+)(in) = H(+)(out)</text>
        <dbReference type="Rhea" id="RHEA:34979"/>
        <dbReference type="ChEBI" id="CHEBI:15378"/>
    </reaction>
</comment>
<comment type="subunit">
    <text evidence="1">Component of the ATP synthase complex composed at least of ATP5F1A/subunit alpha, ATP5F1B/subunit beta, ATP5MC1/subunit c (homooctomer), MT-ATP6/subunit a, MT-ATP8/subunit 8, ATP5ME/subunit e, ATP5MF/subunit f, ATP5MG/subunit g, ATP5MK/subunit k, ATP5MJ/subunit j, ATP5F1C/subunit gamma, ATP5F1D/subunit delta, ATP5F1E/subunit epsilon, ATP5PF/subunit F6, ATP5PB/subunit b, ATP5PD/subunit d, ATP5PO/subunit OSCP. ATP synthase complex consists of a soluble F(1) head domain (subunits alpha(3) and beta(3)) - the catalytic core - and a membrane F(0) domain - the membrane proton channel (subunits c, a, 8, e, f, g, k and j). These two domains are linked by a central stalk (subunits gamma, delta, and epsilon) rotating inside the F1 region and a stationary peripheral stalk (subunits F6, b, d, and OSCP). Interacts with DNAJC30; interaction is direct.</text>
</comment>
<comment type="subcellular location">
    <subcellularLocation>
        <location>Mitochondrion inner membrane</location>
        <topology>Multi-pass membrane protein</topology>
    </subcellularLocation>
</comment>
<comment type="similarity">
    <text evidence="3">Belongs to the ATPase A chain family.</text>
</comment>
<protein>
    <recommendedName>
        <fullName evidence="1">ATP synthase F(0) complex subunit a</fullName>
    </recommendedName>
    <alternativeName>
        <fullName>F-ATPase protein 6</fullName>
    </alternativeName>
    <alternativeName>
        <fullName evidence="1">Proton-conducting channel, ATP synthase F(0) complex subunit a</fullName>
    </alternativeName>
</protein>
<reference key="1">
    <citation type="journal article" date="1997" name="Proc. Natl. Acad. Sci. U.S.A.">
        <title>The role of habitat shift in the evolution of lizard morphology: evidence from tropical Tropidurus.</title>
        <authorList>
            <person name="Vitt L.J."/>
            <person name="Caldwell J.P."/>
            <person name="Zani P.A."/>
            <person name="Titus T.A."/>
        </authorList>
    </citation>
    <scope>NUCLEOTIDE SEQUENCE [GENOMIC DNA]</scope>
</reference>